<organismHost>
    <name type="scientific">Macaca mulatta</name>
    <name type="common">Rhesus macaque</name>
    <dbReference type="NCBI Taxonomy" id="9544"/>
</organismHost>
<name>NSP1_ROTS1</name>
<sequence length="495" mass="58484">MATFKDACFHYRRLTALNRRLCNIGANSICMPVPDEKIKGWCLECCQIADLTHCYGCSLPHVCKWCVQNRRCFLDNEPHLLKLRTVKHPITKDKLQCIIDLYNIIFPINDKVIRKFERMIKQRKCRNQYKIEWYNHLLLPITLNAAAFKFDENNLYYVFGLYEKSVSDIYAPYRIVNFINEFDKLLLDDINFTRMSNLPIELRTIMQEYFQLSRLPSSKLKQIYFSDFTKETVIFNTYTKTPGRSIYRNVTEFNWRDELELYSDLKNDKNKLIAAMMTSKYTRFYAHDNNFGRLKMTIFELGHHCQPNYVASNHPGNASDIQYCKWCNIKYFLSKIDWRIRDMYNLLMEFIKDCYKSNVNVGHCSSVENIYPLIKRLIWSLFTNHMDQTIEEVFNHMSPVSVEGTNVIMLILGLNISLYNEIKRTLNVDSIPMVLNLNEFSSIVKSISSKWYNVDELDKLPMSIKSTEELIEMKNSGTLTEEFELLISNSEDDNE</sequence>
<dbReference type="EMBL" id="X14914">
    <property type="protein sequence ID" value="CAA33039.1"/>
    <property type="molecule type" value="Genomic_RNA"/>
</dbReference>
<dbReference type="PIR" id="S08215">
    <property type="entry name" value="MNXRSA"/>
</dbReference>
<dbReference type="Proteomes" id="UP000007180">
    <property type="component" value="Genome"/>
</dbReference>
<dbReference type="GO" id="GO:0030430">
    <property type="term" value="C:host cell cytoplasm"/>
    <property type="evidence" value="ECO:0007669"/>
    <property type="project" value="UniProtKB-UniRule"/>
</dbReference>
<dbReference type="GO" id="GO:0044163">
    <property type="term" value="C:host cytoskeleton"/>
    <property type="evidence" value="ECO:0007669"/>
    <property type="project" value="UniProtKB-SubCell"/>
</dbReference>
<dbReference type="GO" id="GO:0046872">
    <property type="term" value="F:metal ion binding"/>
    <property type="evidence" value="ECO:0007669"/>
    <property type="project" value="UniProtKB-UniRule"/>
</dbReference>
<dbReference type="GO" id="GO:0003723">
    <property type="term" value="F:RNA binding"/>
    <property type="evidence" value="ECO:0007669"/>
    <property type="project" value="UniProtKB-UniRule"/>
</dbReference>
<dbReference type="GO" id="GO:0039548">
    <property type="term" value="P:symbiont-mediated suppression of host cytoplasmic pattern recognition receptor signaling pathway via inhibition of IRF3 activity"/>
    <property type="evidence" value="ECO:0007669"/>
    <property type="project" value="UniProtKB-UniRule"/>
</dbReference>
<dbReference type="GO" id="GO:0039557">
    <property type="term" value="P:symbiont-mediated suppression of host cytoplasmic pattern recognition receptor signaling pathway via inhibition of IRF7 activity"/>
    <property type="evidence" value="ECO:0007669"/>
    <property type="project" value="UniProtKB-UniRule"/>
</dbReference>
<dbReference type="HAMAP" id="MF_04088">
    <property type="entry name" value="ROTA_NSP1"/>
    <property type="match status" value="1"/>
</dbReference>
<dbReference type="InterPro" id="IPR002148">
    <property type="entry name" value="Rotavirus_NSP1"/>
</dbReference>
<dbReference type="Pfam" id="PF00981">
    <property type="entry name" value="Rota_NS53"/>
    <property type="match status" value="1"/>
</dbReference>
<accession>P15687</accession>
<proteinExistence type="inferred from homology"/>
<evidence type="ECO:0000255" key="1">
    <source>
        <dbReference type="HAMAP-Rule" id="MF_04088"/>
    </source>
</evidence>
<feature type="chain" id="PRO_0000149558" description="Non-structural protein 1">
    <location>
        <begin position="1"/>
        <end position="495"/>
    </location>
</feature>
<feature type="region of interest" description="RNA-binding" evidence="1">
    <location>
        <begin position="1"/>
        <end position="81"/>
    </location>
</feature>
<feature type="region of interest" description="Zinc-binding domain" evidence="1">
    <location>
        <begin position="42"/>
        <end position="79"/>
    </location>
</feature>
<feature type="region of interest" description="Important for cytoskeleton localization" evidence="1">
    <location>
        <begin position="82"/>
        <end position="177"/>
    </location>
</feature>
<feature type="region of interest" description="Interaction with host IRF3" evidence="1">
    <location>
        <begin position="320"/>
        <end position="495"/>
    </location>
</feature>
<feature type="short sequence motif" description="pLxIS motif" evidence="1">
    <location>
        <begin position="485"/>
        <end position="488"/>
    </location>
</feature>
<protein>
    <recommendedName>
        <fullName evidence="1">Non-structural protein 1</fullName>
        <shortName evidence="1">NSP1</shortName>
    </recommendedName>
    <alternativeName>
        <fullName evidence="1">NCVP2</fullName>
    </alternativeName>
    <alternativeName>
        <fullName evidence="1">Non-structural RNA-binding protein 53</fullName>
        <shortName evidence="1">NS53</shortName>
    </alternativeName>
</protein>
<keyword id="KW-1035">Host cytoplasm</keyword>
<keyword id="KW-1037">Host cytoskeleton</keyword>
<keyword id="KW-0945">Host-virus interaction</keyword>
<keyword id="KW-1090">Inhibition of host innate immune response by virus</keyword>
<keyword id="KW-1092">Inhibition of host IRF3 by virus</keyword>
<keyword id="KW-1093">Inhibition of host IRF7 by virus</keyword>
<keyword id="KW-1113">Inhibition of host RLR pathway by virus</keyword>
<keyword id="KW-0922">Interferon antiviral system evasion</keyword>
<keyword id="KW-0479">Metal-binding</keyword>
<keyword id="KW-1185">Reference proteome</keyword>
<keyword id="KW-0694">RNA-binding</keyword>
<keyword id="KW-0899">Viral immunoevasion</keyword>
<comment type="function">
    <text evidence="1">Plays a role in the inhibition of host innate immunity by inducing the degradation of key host factors required to activate interferon production such as IRF3, IRF5 or IRF7. Associates with components of cullin RING ligases (CRLs) including CUL1 or CUL3, which are essential multisubunit ubiquitination complexes, to modulate their activities.</text>
</comment>
<comment type="subunit">
    <text evidence="1">Interacts (via C-terminus) with host IRF3; this interaction leads to IRF3 degradation. Interacts with host IRF7; this interaction leads to IRF7 degradation. Interacts with host CUL1 and CUL3.</text>
</comment>
<comment type="subcellular location">
    <subcellularLocation>
        <location evidence="1">Host cytoplasm</location>
        <location evidence="1">Host cytoskeleton</location>
    </subcellularLocation>
</comment>
<comment type="domain">
    <text evidence="1">The integrity of the zinc-binding domain in NSP1 is important for degradation of host IRF3.</text>
</comment>
<comment type="domain">
    <text evidence="1">The pLxIS motif targets host IRF3 for degradation; however phosphorylation of NSP1 pLxIS motif is not required for its activity.</text>
</comment>
<comment type="similarity">
    <text evidence="1">Belongs to the rotavirus NSP1 family.</text>
</comment>
<reference key="1">
    <citation type="journal article" date="1990" name="Virology">
        <title>Conservation of a potential metal binding motif despite extensive sequence diversity in the rotavirus nonstructural protein NS53.</title>
        <authorList>
            <person name="Mitchell D.B."/>
            <person name="Both G.W."/>
        </authorList>
    </citation>
    <scope>NUCLEOTIDE SEQUENCE [GENOMIC RNA]</scope>
</reference>
<organism>
    <name type="scientific">Rotavirus A (strain RVA/SA11-Both/G3P5B[2])</name>
    <name type="common">RV-A</name>
    <name type="synonym">Simian Agent 11 (strain Both)</name>
    <dbReference type="NCBI Taxonomy" id="37137"/>
    <lineage>
        <taxon>Viruses</taxon>
        <taxon>Riboviria</taxon>
        <taxon>Orthornavirae</taxon>
        <taxon>Duplornaviricota</taxon>
        <taxon>Resentoviricetes</taxon>
        <taxon>Reovirales</taxon>
        <taxon>Sedoreoviridae</taxon>
        <taxon>Rotavirus</taxon>
        <taxon>Rotavirus A</taxon>
    </lineage>
</organism>